<feature type="chain" id="PRO_0000302498" description="ATP-dependent dethiobiotin synthetase BioD">
    <location>
        <begin position="1"/>
        <end position="238"/>
    </location>
</feature>
<feature type="active site" evidence="1">
    <location>
        <position position="38"/>
    </location>
</feature>
<feature type="binding site" evidence="1">
    <location>
        <begin position="13"/>
        <end position="18"/>
    </location>
    <ligand>
        <name>ATP</name>
        <dbReference type="ChEBI" id="CHEBI:30616"/>
    </ligand>
</feature>
<feature type="binding site" evidence="1">
    <location>
        <position position="17"/>
    </location>
    <ligand>
        <name>Mg(2+)</name>
        <dbReference type="ChEBI" id="CHEBI:18420"/>
    </ligand>
</feature>
<feature type="binding site" evidence="1">
    <location>
        <position position="42"/>
    </location>
    <ligand>
        <name>substrate</name>
    </ligand>
</feature>
<feature type="binding site" evidence="1">
    <location>
        <position position="55"/>
    </location>
    <ligand>
        <name>ATP</name>
        <dbReference type="ChEBI" id="CHEBI:30616"/>
    </ligand>
</feature>
<feature type="binding site" evidence="1">
    <location>
        <position position="55"/>
    </location>
    <ligand>
        <name>Mg(2+)</name>
        <dbReference type="ChEBI" id="CHEBI:18420"/>
    </ligand>
</feature>
<feature type="binding site" evidence="1">
    <location>
        <begin position="116"/>
        <end position="119"/>
    </location>
    <ligand>
        <name>ATP</name>
        <dbReference type="ChEBI" id="CHEBI:30616"/>
    </ligand>
</feature>
<feature type="binding site" evidence="1">
    <location>
        <position position="116"/>
    </location>
    <ligand>
        <name>Mg(2+)</name>
        <dbReference type="ChEBI" id="CHEBI:18420"/>
    </ligand>
</feature>
<feature type="binding site" evidence="1">
    <location>
        <begin position="209"/>
        <end position="211"/>
    </location>
    <ligand>
        <name>ATP</name>
        <dbReference type="ChEBI" id="CHEBI:30616"/>
    </ligand>
</feature>
<feature type="binding site" evidence="1">
    <location>
        <position position="216"/>
    </location>
    <ligand>
        <name>ATP</name>
        <dbReference type="ChEBI" id="CHEBI:30616"/>
    </ligand>
</feature>
<name>BIOD_CLONN</name>
<dbReference type="EC" id="6.3.3.3" evidence="1"/>
<dbReference type="EMBL" id="CP000382">
    <property type="protein sequence ID" value="ABK61999.1"/>
    <property type="molecule type" value="Genomic_DNA"/>
</dbReference>
<dbReference type="RefSeq" id="WP_011721557.1">
    <property type="nucleotide sequence ID" value="NC_008593.1"/>
</dbReference>
<dbReference type="SMR" id="A0PYU7"/>
<dbReference type="STRING" id="386415.NT01CX_1468"/>
<dbReference type="KEGG" id="cno:NT01CX_1468"/>
<dbReference type="PATRIC" id="fig|386415.7.peg.574"/>
<dbReference type="eggNOG" id="COG0132">
    <property type="taxonomic scope" value="Bacteria"/>
</dbReference>
<dbReference type="HOGENOM" id="CLU_072551_3_0_9"/>
<dbReference type="UniPathway" id="UPA00078">
    <property type="reaction ID" value="UER00161"/>
</dbReference>
<dbReference type="Proteomes" id="UP000008220">
    <property type="component" value="Chromosome"/>
</dbReference>
<dbReference type="GO" id="GO:0005829">
    <property type="term" value="C:cytosol"/>
    <property type="evidence" value="ECO:0007669"/>
    <property type="project" value="TreeGrafter"/>
</dbReference>
<dbReference type="GO" id="GO:0005524">
    <property type="term" value="F:ATP binding"/>
    <property type="evidence" value="ECO:0007669"/>
    <property type="project" value="UniProtKB-UniRule"/>
</dbReference>
<dbReference type="GO" id="GO:0004141">
    <property type="term" value="F:dethiobiotin synthase activity"/>
    <property type="evidence" value="ECO:0007669"/>
    <property type="project" value="UniProtKB-UniRule"/>
</dbReference>
<dbReference type="GO" id="GO:0000287">
    <property type="term" value="F:magnesium ion binding"/>
    <property type="evidence" value="ECO:0007669"/>
    <property type="project" value="UniProtKB-UniRule"/>
</dbReference>
<dbReference type="GO" id="GO:0009102">
    <property type="term" value="P:biotin biosynthetic process"/>
    <property type="evidence" value="ECO:0007669"/>
    <property type="project" value="UniProtKB-UniRule"/>
</dbReference>
<dbReference type="CDD" id="cd03109">
    <property type="entry name" value="DTBS"/>
    <property type="match status" value="1"/>
</dbReference>
<dbReference type="Gene3D" id="3.40.50.300">
    <property type="entry name" value="P-loop containing nucleotide triphosphate hydrolases"/>
    <property type="match status" value="1"/>
</dbReference>
<dbReference type="HAMAP" id="MF_00336">
    <property type="entry name" value="BioD"/>
    <property type="match status" value="1"/>
</dbReference>
<dbReference type="InterPro" id="IPR004472">
    <property type="entry name" value="DTB_synth_BioD"/>
</dbReference>
<dbReference type="InterPro" id="IPR027417">
    <property type="entry name" value="P-loop_NTPase"/>
</dbReference>
<dbReference type="NCBIfam" id="TIGR00347">
    <property type="entry name" value="bioD"/>
    <property type="match status" value="1"/>
</dbReference>
<dbReference type="PANTHER" id="PTHR43210:SF2">
    <property type="entry name" value="ATP-DEPENDENT DETHIOBIOTIN SYNTHETASE BIOD 2"/>
    <property type="match status" value="1"/>
</dbReference>
<dbReference type="PANTHER" id="PTHR43210">
    <property type="entry name" value="DETHIOBIOTIN SYNTHETASE"/>
    <property type="match status" value="1"/>
</dbReference>
<dbReference type="Pfam" id="PF13500">
    <property type="entry name" value="AAA_26"/>
    <property type="match status" value="1"/>
</dbReference>
<dbReference type="PIRSF" id="PIRSF006755">
    <property type="entry name" value="DTB_synth"/>
    <property type="match status" value="1"/>
</dbReference>
<dbReference type="SUPFAM" id="SSF52540">
    <property type="entry name" value="P-loop containing nucleoside triphosphate hydrolases"/>
    <property type="match status" value="1"/>
</dbReference>
<keyword id="KW-0067">ATP-binding</keyword>
<keyword id="KW-0093">Biotin biosynthesis</keyword>
<keyword id="KW-0963">Cytoplasm</keyword>
<keyword id="KW-0436">Ligase</keyword>
<keyword id="KW-0460">Magnesium</keyword>
<keyword id="KW-0479">Metal-binding</keyword>
<keyword id="KW-0547">Nucleotide-binding</keyword>
<keyword id="KW-1185">Reference proteome</keyword>
<protein>
    <recommendedName>
        <fullName evidence="1">ATP-dependent dethiobiotin synthetase BioD</fullName>
        <ecNumber evidence="1">6.3.3.3</ecNumber>
    </recommendedName>
    <alternativeName>
        <fullName evidence="1">DTB synthetase</fullName>
        <shortName evidence="1">DTBS</shortName>
    </alternativeName>
    <alternativeName>
        <fullName evidence="1">Dethiobiotin synthase</fullName>
    </alternativeName>
</protein>
<accession>A0PYU7</accession>
<sequence>MSNGIFIVGTDTDIGKTFVTGGILYLLRKNGVNASYFKAALSGAIKVNERLIPGDTKFVSDLSGLNEEYSFLTPYVFETAVSPHLASKIENIPINLEVIKSSYLKVKEKYDYIVAEGSGGIVCPMVHNEKSTILLEDIIKLLDLDTLLVASAGLGSINHTVLTVKYIENAGLNIKGIIVNGYDENNICHRDNVKMIKKLTSKDIIALIPRIKDNNNHKEIKKVFDDLDYKKIKKCIGA</sequence>
<gene>
    <name evidence="1" type="primary">bioD</name>
    <name type="ordered locus">NT01CX_1468</name>
</gene>
<comment type="function">
    <text evidence="1">Catalyzes a mechanistically unusual reaction, the ATP-dependent insertion of CO2 between the N7 and N8 nitrogen atoms of 7,8-diaminopelargonic acid (DAPA, also called 7,8-diammoniononanoate) to form a ureido ring.</text>
</comment>
<comment type="catalytic activity">
    <reaction evidence="1">
        <text>(7R,8S)-7,8-diammoniononanoate + CO2 + ATP = (4R,5S)-dethiobiotin + ADP + phosphate + 3 H(+)</text>
        <dbReference type="Rhea" id="RHEA:15805"/>
        <dbReference type="ChEBI" id="CHEBI:15378"/>
        <dbReference type="ChEBI" id="CHEBI:16526"/>
        <dbReference type="ChEBI" id="CHEBI:30616"/>
        <dbReference type="ChEBI" id="CHEBI:43474"/>
        <dbReference type="ChEBI" id="CHEBI:149469"/>
        <dbReference type="ChEBI" id="CHEBI:149473"/>
        <dbReference type="ChEBI" id="CHEBI:456216"/>
        <dbReference type="EC" id="6.3.3.3"/>
    </reaction>
</comment>
<comment type="cofactor">
    <cofactor evidence="1">
        <name>Mg(2+)</name>
        <dbReference type="ChEBI" id="CHEBI:18420"/>
    </cofactor>
</comment>
<comment type="pathway">
    <text evidence="1">Cofactor biosynthesis; biotin biosynthesis; biotin from 7,8-diaminononanoate: step 1/2.</text>
</comment>
<comment type="subunit">
    <text evidence="1">Homodimer.</text>
</comment>
<comment type="subcellular location">
    <subcellularLocation>
        <location evidence="1">Cytoplasm</location>
    </subcellularLocation>
</comment>
<comment type="similarity">
    <text evidence="1">Belongs to the dethiobiotin synthetase family.</text>
</comment>
<proteinExistence type="inferred from homology"/>
<evidence type="ECO:0000255" key="1">
    <source>
        <dbReference type="HAMAP-Rule" id="MF_00336"/>
    </source>
</evidence>
<reference key="1">
    <citation type="journal article" date="2006" name="Nat. Biotechnol.">
        <title>The genome and transcriptomes of the anti-tumor agent Clostridium novyi-NT.</title>
        <authorList>
            <person name="Bettegowda C."/>
            <person name="Huang X."/>
            <person name="Lin J."/>
            <person name="Cheong I."/>
            <person name="Kohli M."/>
            <person name="Szabo S.A."/>
            <person name="Zhang X."/>
            <person name="Diaz L.A. Jr."/>
            <person name="Velculescu V.E."/>
            <person name="Parmigiani G."/>
            <person name="Kinzler K.W."/>
            <person name="Vogelstein B."/>
            <person name="Zhou S."/>
        </authorList>
    </citation>
    <scope>NUCLEOTIDE SEQUENCE [LARGE SCALE GENOMIC DNA]</scope>
    <source>
        <strain>NT</strain>
    </source>
</reference>
<organism>
    <name type="scientific">Clostridium novyi (strain NT)</name>
    <dbReference type="NCBI Taxonomy" id="386415"/>
    <lineage>
        <taxon>Bacteria</taxon>
        <taxon>Bacillati</taxon>
        <taxon>Bacillota</taxon>
        <taxon>Clostridia</taxon>
        <taxon>Eubacteriales</taxon>
        <taxon>Clostridiaceae</taxon>
        <taxon>Clostridium</taxon>
    </lineage>
</organism>